<dbReference type="EC" id="3.6.4.13" evidence="1"/>
<dbReference type="EMBL" id="X57328">
    <property type="protein sequence ID" value="CAA40605.1"/>
    <property type="molecule type" value="mRNA"/>
</dbReference>
<dbReference type="PIR" id="S13654">
    <property type="entry name" value="S13654"/>
</dbReference>
<dbReference type="RefSeq" id="NP_001095245.1">
    <property type="nucleotide sequence ID" value="NM_001101775.1"/>
</dbReference>
<dbReference type="SMR" id="P24346"/>
<dbReference type="BioGRID" id="99271">
    <property type="interactions" value="1"/>
</dbReference>
<dbReference type="DIP" id="DIP-59067N"/>
<dbReference type="IntAct" id="P24346">
    <property type="interactions" value="1"/>
</dbReference>
<dbReference type="GeneID" id="397935"/>
<dbReference type="KEGG" id="xla:397935"/>
<dbReference type="AGR" id="Xenbase:XB-GENE-17330554"/>
<dbReference type="CTD" id="397935"/>
<dbReference type="Xenbase" id="XB-GENE-17330554">
    <property type="gene designation" value="ddx3x.S"/>
</dbReference>
<dbReference type="OrthoDB" id="196131at2759"/>
<dbReference type="SABIO-RK" id="P24346"/>
<dbReference type="Proteomes" id="UP000186698">
    <property type="component" value="Chromosome 2S"/>
</dbReference>
<dbReference type="Bgee" id="397935">
    <property type="expression patterns" value="Expressed in pancreas and 19 other cell types or tissues"/>
</dbReference>
<dbReference type="GO" id="GO:0061702">
    <property type="term" value="C:canonical inflammasome complex"/>
    <property type="evidence" value="ECO:0007669"/>
    <property type="project" value="UniProtKB-SubCell"/>
</dbReference>
<dbReference type="GO" id="GO:0031252">
    <property type="term" value="C:cell leading edge"/>
    <property type="evidence" value="ECO:0000250"/>
    <property type="project" value="UniProtKB"/>
</dbReference>
<dbReference type="GO" id="GO:0005737">
    <property type="term" value="C:cytoplasm"/>
    <property type="evidence" value="ECO:0000250"/>
    <property type="project" value="UniProtKB"/>
</dbReference>
<dbReference type="GO" id="GO:0010494">
    <property type="term" value="C:cytoplasmic stress granule"/>
    <property type="evidence" value="ECO:0007669"/>
    <property type="project" value="UniProtKB-SubCell"/>
</dbReference>
<dbReference type="GO" id="GO:0030027">
    <property type="term" value="C:lamellipodium"/>
    <property type="evidence" value="ECO:0007669"/>
    <property type="project" value="UniProtKB-SubCell"/>
</dbReference>
<dbReference type="GO" id="GO:0005634">
    <property type="term" value="C:nucleus"/>
    <property type="evidence" value="ECO:0000318"/>
    <property type="project" value="GO_Central"/>
</dbReference>
<dbReference type="GO" id="GO:0043186">
    <property type="term" value="C:P granule"/>
    <property type="evidence" value="ECO:0000318"/>
    <property type="project" value="GO_Central"/>
</dbReference>
<dbReference type="GO" id="GO:0005886">
    <property type="term" value="C:plasma membrane"/>
    <property type="evidence" value="ECO:0007669"/>
    <property type="project" value="UniProtKB-SubCell"/>
</dbReference>
<dbReference type="GO" id="GO:0005524">
    <property type="term" value="F:ATP binding"/>
    <property type="evidence" value="ECO:0007669"/>
    <property type="project" value="UniProtKB-KW"/>
</dbReference>
<dbReference type="GO" id="GO:0016887">
    <property type="term" value="F:ATP hydrolysis activity"/>
    <property type="evidence" value="ECO:0007669"/>
    <property type="project" value="RHEA"/>
</dbReference>
<dbReference type="GO" id="GO:0003729">
    <property type="term" value="F:mRNA binding"/>
    <property type="evidence" value="ECO:0000318"/>
    <property type="project" value="GO_Central"/>
</dbReference>
<dbReference type="GO" id="GO:0003724">
    <property type="term" value="F:RNA helicase activity"/>
    <property type="evidence" value="ECO:0000318"/>
    <property type="project" value="GO_Central"/>
</dbReference>
<dbReference type="GO" id="GO:0030154">
    <property type="term" value="P:cell differentiation"/>
    <property type="evidence" value="ECO:0000318"/>
    <property type="project" value="GO_Central"/>
</dbReference>
<dbReference type="GO" id="GO:0007276">
    <property type="term" value="P:gamete generation"/>
    <property type="evidence" value="ECO:0000318"/>
    <property type="project" value="GO_Central"/>
</dbReference>
<dbReference type="GO" id="GO:1902042">
    <property type="term" value="P:negative regulation of extrinsic apoptotic signaling pathway via death domain receptors"/>
    <property type="evidence" value="ECO:0000250"/>
    <property type="project" value="UniProtKB"/>
</dbReference>
<dbReference type="GO" id="GO:0010629">
    <property type="term" value="P:negative regulation of gene expression"/>
    <property type="evidence" value="ECO:0000318"/>
    <property type="project" value="GO_Central"/>
</dbReference>
<dbReference type="CDD" id="cd18051">
    <property type="entry name" value="DEADc_DDX3"/>
    <property type="match status" value="1"/>
</dbReference>
<dbReference type="CDD" id="cd18787">
    <property type="entry name" value="SF2_C_DEAD"/>
    <property type="match status" value="1"/>
</dbReference>
<dbReference type="FunFam" id="3.40.50.300:FF:000160">
    <property type="entry name" value="ATP-dependent RNA helicase DDX3X"/>
    <property type="match status" value="1"/>
</dbReference>
<dbReference type="FunFam" id="3.40.50.300:FF:000008">
    <property type="entry name" value="ATP-dependent RNA helicase RhlB"/>
    <property type="match status" value="1"/>
</dbReference>
<dbReference type="Gene3D" id="3.40.50.300">
    <property type="entry name" value="P-loop containing nucleotide triphosphate hydrolases"/>
    <property type="match status" value="2"/>
</dbReference>
<dbReference type="InterPro" id="IPR011545">
    <property type="entry name" value="DEAD/DEAH_box_helicase_dom"/>
</dbReference>
<dbReference type="InterPro" id="IPR014001">
    <property type="entry name" value="Helicase_ATP-bd"/>
</dbReference>
<dbReference type="InterPro" id="IPR001650">
    <property type="entry name" value="Helicase_C-like"/>
</dbReference>
<dbReference type="InterPro" id="IPR027417">
    <property type="entry name" value="P-loop_NTPase"/>
</dbReference>
<dbReference type="InterPro" id="IPR000629">
    <property type="entry name" value="RNA-helicase_DEAD-box_CS"/>
</dbReference>
<dbReference type="InterPro" id="IPR014014">
    <property type="entry name" value="RNA_helicase_DEAD_Q_motif"/>
</dbReference>
<dbReference type="PANTHER" id="PTHR47958">
    <property type="entry name" value="ATP-DEPENDENT RNA HELICASE DBP3"/>
    <property type="match status" value="1"/>
</dbReference>
<dbReference type="Pfam" id="PF00270">
    <property type="entry name" value="DEAD"/>
    <property type="match status" value="1"/>
</dbReference>
<dbReference type="Pfam" id="PF00271">
    <property type="entry name" value="Helicase_C"/>
    <property type="match status" value="1"/>
</dbReference>
<dbReference type="SMART" id="SM00487">
    <property type="entry name" value="DEXDc"/>
    <property type="match status" value="1"/>
</dbReference>
<dbReference type="SMART" id="SM00490">
    <property type="entry name" value="HELICc"/>
    <property type="match status" value="1"/>
</dbReference>
<dbReference type="SUPFAM" id="SSF52540">
    <property type="entry name" value="P-loop containing nucleoside triphosphate hydrolases"/>
    <property type="match status" value="1"/>
</dbReference>
<dbReference type="PROSITE" id="PS00039">
    <property type="entry name" value="DEAD_ATP_HELICASE"/>
    <property type="match status" value="1"/>
</dbReference>
<dbReference type="PROSITE" id="PS51192">
    <property type="entry name" value="HELICASE_ATP_BIND_1"/>
    <property type="match status" value="1"/>
</dbReference>
<dbReference type="PROSITE" id="PS51194">
    <property type="entry name" value="HELICASE_CTER"/>
    <property type="match status" value="1"/>
</dbReference>
<dbReference type="PROSITE" id="PS51195">
    <property type="entry name" value="Q_MOTIF"/>
    <property type="match status" value="1"/>
</dbReference>
<sequence length="697" mass="77303">MSHVAVENVLNLDQQFAGLDLNSADAESGVAGTKGRYIPPHLRNKEASRNDSNWDSGRGGNGYINGMQDDRDGRMNGYDRGGYGSRGTGRSDRGFYDRENSGWNSGRDKDAYSSFGSRGDRGKGSLFNERGSGSRRTDDRRQDGFDGMGNRSDKSGFGRFDRGNSRWSDDRNDEDDWSKPLAPNDRVEQELFSGSNTGINFEKYDDIPVEATGSNCPPHIESFHDVTMGEIIMGNIQLTRYTRPTPVQKHAIPIIIEKRDLMACAQTGSGKTAAFLLPILSQIYADGPGDAMKHLQENGRYGRRKQFPLSLVLAPTRELAVQIYEEARKFAYRSRVRPCVVYGGADIGQQIRDLERGCHLLVATPGRLVDMMERGKIGLDFCKYLVLDEADRMLDMGFEPQIRRIVEQDTMPPKGVRQTMMFSATFPKEIQILARDFLDEYIFLAVGRVGSTSENITQKVVWVEEMDKRSFLLDLLNATGKDSLTLVFVETKKGADALEDFLYHEGYACTSIHGDRSQRDREEALHQFRSGKSPILVATAVAARGLDISNVKHVINFDLPSDIEEYVHRIGRTGRVGNLGLATSFFNEKNINITKDLLDLLVEAKQEVPSWLENMAYEQHHKSSSRGRSKSRFSGGFGAKDYRQSSGAGSSFGSSRGGRSSGHGGSRGFGGGYGGFYNSDGYGGNYGGSSQVDWWGN</sequence>
<accession>P24346</accession>
<reference key="1">
    <citation type="journal article" date="1991" name="Nature">
        <title>The Xenopus localized messenger RNA An3 may encode an ATP-dependent RNA helicase.</title>
        <authorList>
            <person name="Gururajan R."/>
            <person name="Perry-O'Keefe H."/>
            <person name="Melton D.A."/>
            <person name="Weeks D.L."/>
        </authorList>
    </citation>
    <scope>NUCLEOTIDE SEQUENCE [MRNA]</scope>
</reference>
<reference key="2">
    <citation type="journal article" date="2013" name="Science">
        <title>RNA helicase DDX3 is a regulatory subunit of casein kinase 1 in Wnt-beta-catenin signaling.</title>
        <authorList>
            <person name="Cruciat C.M."/>
            <person name="Dolde C."/>
            <person name="de Groot R.E."/>
            <person name="Ohkawara B."/>
            <person name="Reinhard C."/>
            <person name="Korswagen H.C."/>
            <person name="Niehrs C."/>
        </authorList>
    </citation>
    <scope>FUNCTION</scope>
    <scope>DEVELOPMENTAL STAGE</scope>
    <scope>DISRUPTION PHENOTYPE</scope>
</reference>
<feature type="chain" id="PRO_0000055015" description="Putative ATP-dependent RNA helicase an3">
    <location>
        <begin position="1"/>
        <end position="697"/>
    </location>
</feature>
<feature type="domain" description="Helicase ATP-binding" evidence="3">
    <location>
        <begin position="252"/>
        <end position="444"/>
    </location>
</feature>
<feature type="domain" description="Helicase C-terminal" evidence="4">
    <location>
        <begin position="455"/>
        <end position="616"/>
    </location>
</feature>
<feature type="region of interest" description="Disordered" evidence="5">
    <location>
        <begin position="27"/>
        <end position="189"/>
    </location>
</feature>
<feature type="region of interest" description="Disordered" evidence="5">
    <location>
        <begin position="619"/>
        <end position="666"/>
    </location>
</feature>
<feature type="short sequence motif" description="Q motif">
    <location>
        <begin position="221"/>
        <end position="249"/>
    </location>
</feature>
<feature type="short sequence motif" description="DEAD box">
    <location>
        <begin position="388"/>
        <end position="391"/>
    </location>
</feature>
<feature type="compositionally biased region" description="Basic and acidic residues" evidence="5">
    <location>
        <begin position="89"/>
        <end position="111"/>
    </location>
</feature>
<feature type="compositionally biased region" description="Basic and acidic residues" evidence="5">
    <location>
        <begin position="135"/>
        <end position="144"/>
    </location>
</feature>
<feature type="compositionally biased region" description="Basic and acidic residues" evidence="5">
    <location>
        <begin position="151"/>
        <end position="170"/>
    </location>
</feature>
<feature type="compositionally biased region" description="Basic residues" evidence="5">
    <location>
        <begin position="622"/>
        <end position="631"/>
    </location>
</feature>
<feature type="compositionally biased region" description="Low complexity" evidence="5">
    <location>
        <begin position="645"/>
        <end position="654"/>
    </location>
</feature>
<feature type="compositionally biased region" description="Gly residues" evidence="5">
    <location>
        <begin position="655"/>
        <end position="666"/>
    </location>
</feature>
<feature type="binding site" evidence="3">
    <location>
        <begin position="241"/>
        <end position="248"/>
    </location>
    <ligand>
        <name>ATP</name>
        <dbReference type="ChEBI" id="CHEBI:30616"/>
    </ligand>
</feature>
<feature type="binding site" evidence="3">
    <location>
        <begin position="265"/>
        <end position="272"/>
    </location>
    <ligand>
        <name>ATP</name>
        <dbReference type="ChEBI" id="CHEBI:30616"/>
    </ligand>
</feature>
<organism>
    <name type="scientific">Xenopus laevis</name>
    <name type="common">African clawed frog</name>
    <dbReference type="NCBI Taxonomy" id="8355"/>
    <lineage>
        <taxon>Eukaryota</taxon>
        <taxon>Metazoa</taxon>
        <taxon>Chordata</taxon>
        <taxon>Craniata</taxon>
        <taxon>Vertebrata</taxon>
        <taxon>Euteleostomi</taxon>
        <taxon>Amphibia</taxon>
        <taxon>Batrachia</taxon>
        <taxon>Anura</taxon>
        <taxon>Pipoidea</taxon>
        <taxon>Pipidae</taxon>
        <taxon>Xenopodinae</taxon>
        <taxon>Xenopus</taxon>
        <taxon>Xenopus</taxon>
    </lineage>
</organism>
<protein>
    <recommendedName>
        <fullName>Putative ATP-dependent RNA helicase an3</fullName>
        <ecNumber evidence="1">3.6.4.13</ecNumber>
    </recommendedName>
</protein>
<proteinExistence type="evidence at transcript level"/>
<evidence type="ECO:0000250" key="1">
    <source>
        <dbReference type="UniProtKB" id="O00571"/>
    </source>
</evidence>
<evidence type="ECO:0000250" key="2">
    <source>
        <dbReference type="UniProtKB" id="Q62167"/>
    </source>
</evidence>
<evidence type="ECO:0000255" key="3">
    <source>
        <dbReference type="PROSITE-ProRule" id="PRU00541"/>
    </source>
</evidence>
<evidence type="ECO:0000255" key="4">
    <source>
        <dbReference type="PROSITE-ProRule" id="PRU00542"/>
    </source>
</evidence>
<evidence type="ECO:0000256" key="5">
    <source>
        <dbReference type="SAM" id="MobiDB-lite"/>
    </source>
</evidence>
<evidence type="ECO:0000269" key="6">
    <source>
    </source>
</evidence>
<evidence type="ECO:0000305" key="7"/>
<name>DDX3_XENLA</name>
<gene>
    <name type="primary">an3</name>
</gene>
<keyword id="KW-0067">ATP-binding</keyword>
<keyword id="KW-1003">Cell membrane</keyword>
<keyword id="KW-0966">Cell projection</keyword>
<keyword id="KW-0963">Cytoplasm</keyword>
<keyword id="KW-0347">Helicase</keyword>
<keyword id="KW-0378">Hydrolase</keyword>
<keyword id="KW-1271">Inflammasome</keyword>
<keyword id="KW-0472">Membrane</keyword>
<keyword id="KW-0547">Nucleotide-binding</keyword>
<keyword id="KW-0539">Nucleus</keyword>
<keyword id="KW-1185">Reference proteome</keyword>
<keyword id="KW-0694">RNA-binding</keyword>
<comment type="function">
    <text evidence="1 2 6">Multifunctional ATP-dependent RNA helicase. The ATPase activity can be stimulated by various ribo-and deoxynucleic acids indicative for a relaxed substrate specificity. In vitro can unwind partially double-stranded DNA with a preference for 5'-single-stranded DNA overhangs. Involved in many cellular processes, which do not necessarily require its ATPase/helicase catalytic activities. Involved in the regulation of transcription and translation initiation. Involved in innate immunity (By similarity). Involved in both stress and inflammatory responses (By similarity). May negatively regulate extrinsic apoptotic signaling pathway via death domain receptors. May be involved in mitotic chromosome segregation (By similarity). Required for canonical Wnt signaling involved in anteroposterior neural patterning (PubMed:23413191).</text>
</comment>
<comment type="catalytic activity">
    <reaction evidence="1">
        <text>ATP + H2O = ADP + phosphate + H(+)</text>
        <dbReference type="Rhea" id="RHEA:13065"/>
        <dbReference type="ChEBI" id="CHEBI:15377"/>
        <dbReference type="ChEBI" id="CHEBI:15378"/>
        <dbReference type="ChEBI" id="CHEBI:30616"/>
        <dbReference type="ChEBI" id="CHEBI:43474"/>
        <dbReference type="ChEBI" id="CHEBI:456216"/>
        <dbReference type="EC" id="3.6.4.13"/>
    </reaction>
</comment>
<comment type="subcellular location">
    <subcellularLocation>
        <location evidence="1">Cell membrane</location>
    </subcellularLocation>
    <subcellularLocation>
        <location evidence="1">Nucleus</location>
    </subcellularLocation>
    <subcellularLocation>
        <location evidence="1">Cytoplasm</location>
    </subcellularLocation>
    <subcellularLocation>
        <location evidence="1">Cytoplasm</location>
        <location evidence="1">Stress granule</location>
    </subcellularLocation>
    <subcellularLocation>
        <location evidence="2">Inflammasome</location>
    </subcellularLocation>
    <subcellularLocation>
        <location evidence="1">Cell projection</location>
        <location evidence="1">Lamellipodium</location>
    </subcellularLocation>
    <text evidence="1">Shuttles between the nucleus and the cytosol.</text>
</comment>
<comment type="developmental stage">
    <text evidence="6">Widely expressed throughout embryogenesis. At gastrula stage (st. 10.5), equal expression in ventral and dorsal marginal zones. At neurula stage (st. 18), highest expression levels in ectodermal cells.</text>
</comment>
<comment type="disruption phenotype">
    <text evidence="6">Morpholino knockdown of the protein causes anteriorization of embryos, that exhibit enlarged heads and eyes, shortened tails and defective melanocyte and eye pigmentation.</text>
</comment>
<comment type="similarity">
    <text evidence="7">Belongs to the DEAD box helicase family. DDX3/DED1 subfamily.</text>
</comment>